<reference key="1">
    <citation type="journal article" date="1997" name="Nature">
        <title>Molecular basis of symbiosis between Rhizobium and legumes.</title>
        <authorList>
            <person name="Freiberg C.A."/>
            <person name="Fellay R."/>
            <person name="Bairoch A."/>
            <person name="Broughton W.J."/>
            <person name="Rosenthal A."/>
            <person name="Perret X."/>
        </authorList>
    </citation>
    <scope>NUCLEOTIDE SEQUENCE [LARGE SCALE GENOMIC DNA]</scope>
    <source>
        <strain>NBRC 101917 / NGR234</strain>
    </source>
</reference>
<reference key="2">
    <citation type="journal article" date="2009" name="Appl. Environ. Microbiol.">
        <title>Rhizobium sp. strain NGR234 possesses a remarkable number of secretion systems.</title>
        <authorList>
            <person name="Schmeisser C."/>
            <person name="Liesegang H."/>
            <person name="Krysciak D."/>
            <person name="Bakkou N."/>
            <person name="Le Quere A."/>
            <person name="Wollherr A."/>
            <person name="Heinemeyer I."/>
            <person name="Morgenstern B."/>
            <person name="Pommerening-Roeser A."/>
            <person name="Flores M."/>
            <person name="Palacios R."/>
            <person name="Brenner S."/>
            <person name="Gottschalk G."/>
            <person name="Schmitz R.A."/>
            <person name="Broughton W.J."/>
            <person name="Perret X."/>
            <person name="Strittmatter A.W."/>
            <person name="Streit W.R."/>
        </authorList>
    </citation>
    <scope>NUCLEOTIDE SEQUENCE [LARGE SCALE GENOMIC DNA]</scope>
    <source>
        <strain>NBRC 101917 / NGR234</strain>
    </source>
</reference>
<gene>
    <name type="ordered locus">NGR_a00080</name>
    <name type="ORF">y4cF</name>
</gene>
<geneLocation type="plasmid">
    <name>sym pNGR234a</name>
</geneLocation>
<protein>
    <recommendedName>
        <fullName>Uncharacterized protein y4cF</fullName>
    </recommendedName>
</protein>
<dbReference type="EMBL" id="U00090">
    <property type="protein sequence ID" value="AAB91636.1"/>
    <property type="molecule type" value="Genomic_DNA"/>
</dbReference>
<dbReference type="PIR" id="T28633">
    <property type="entry name" value="T28633"/>
</dbReference>
<dbReference type="RefSeq" id="NP_443798.1">
    <property type="nucleotide sequence ID" value="NC_000914.2"/>
</dbReference>
<dbReference type="SMR" id="P55388"/>
<dbReference type="KEGG" id="rhi:NGR_a00080"/>
<dbReference type="PATRIC" id="fig|394.7.peg.6"/>
<dbReference type="eggNOG" id="ENOG502Z8JD">
    <property type="taxonomic scope" value="Bacteria"/>
</dbReference>
<dbReference type="HOGENOM" id="CLU_062224_0_0_5"/>
<dbReference type="OrthoDB" id="7989940at2"/>
<dbReference type="Proteomes" id="UP000001054">
    <property type="component" value="Plasmid pNGR234a"/>
</dbReference>
<dbReference type="InterPro" id="IPR011670">
    <property type="entry name" value="DUF1612"/>
</dbReference>
<dbReference type="InterPro" id="IPR021068">
    <property type="entry name" value="HTH_DNA-bd"/>
</dbReference>
<dbReference type="InterPro" id="IPR048017">
    <property type="entry name" value="Y4cF-like"/>
</dbReference>
<dbReference type="NCBIfam" id="NF040876">
    <property type="entry name" value="RHE_PE00001_fam"/>
    <property type="match status" value="1"/>
</dbReference>
<dbReference type="Pfam" id="PF07756">
    <property type="entry name" value="DUF1612"/>
    <property type="match status" value="1"/>
</dbReference>
<dbReference type="Pfam" id="PF11972">
    <property type="entry name" value="HTH_13"/>
    <property type="match status" value="1"/>
</dbReference>
<feature type="chain" id="PRO_0000200816" description="Uncharacterized protein y4cF">
    <location>
        <begin position="1"/>
        <end position="380"/>
    </location>
</feature>
<name>Y4CF_SINFN</name>
<accession>P55388</accession>
<sequence>MAYDLAKISTTALMRPAFEAGIGFTRLDERIARSPVGSGWIERMHFLDACASLWIDGELVHLEDLVLHDATRDIRTPTHELTIARDVLRTRRRIAAQSPDWPLSTEGIRTLRQTSDINPVGVEAVEPADVIRPAVAIDPEGEGDDGNDAKDLPGVDYAAIDAVLARSEAAIEDARRPGRAGANSWAAEKDPLVYDLDWDEDARLVEWRSVLRQAQDLPAVLQAIVALDAWNELSVLQHAPWLGRLLCASILREAGITTGAHLAAINLGLKTIPVDRRRHRGRETRLLAIAHGLLAAAEIGMKEHDRLTLAKTMMDRKLDGRRTSSKLPELVELVMAKPLVSAGMVSKTLEVTPQAARRIVTELGLREMTGRGRFRAWGVI</sequence>
<keyword id="KW-0614">Plasmid</keyword>
<keyword id="KW-1185">Reference proteome</keyword>
<organism>
    <name type="scientific">Sinorhizobium fredii (strain NBRC 101917 / NGR234)</name>
    <dbReference type="NCBI Taxonomy" id="394"/>
    <lineage>
        <taxon>Bacteria</taxon>
        <taxon>Pseudomonadati</taxon>
        <taxon>Pseudomonadota</taxon>
        <taxon>Alphaproteobacteria</taxon>
        <taxon>Hyphomicrobiales</taxon>
        <taxon>Rhizobiaceae</taxon>
        <taxon>Sinorhizobium/Ensifer group</taxon>
        <taxon>Sinorhizobium</taxon>
    </lineage>
</organism>
<proteinExistence type="predicted"/>